<comment type="function">
    <text evidence="1">Nucleotidase that shows phosphatase activity on nucleoside 5'-monophosphates.</text>
</comment>
<comment type="catalytic activity">
    <reaction evidence="1">
        <text>a ribonucleoside 5'-phosphate + H2O = a ribonucleoside + phosphate</text>
        <dbReference type="Rhea" id="RHEA:12484"/>
        <dbReference type="ChEBI" id="CHEBI:15377"/>
        <dbReference type="ChEBI" id="CHEBI:18254"/>
        <dbReference type="ChEBI" id="CHEBI:43474"/>
        <dbReference type="ChEBI" id="CHEBI:58043"/>
        <dbReference type="EC" id="3.1.3.5"/>
    </reaction>
</comment>
<comment type="cofactor">
    <cofactor evidence="1">
        <name>a divalent metal cation</name>
        <dbReference type="ChEBI" id="CHEBI:60240"/>
    </cofactor>
    <text evidence="1">Binds 1 divalent metal cation per subunit.</text>
</comment>
<comment type="subcellular location">
    <subcellularLocation>
        <location evidence="1">Cytoplasm</location>
    </subcellularLocation>
</comment>
<comment type="similarity">
    <text evidence="1">Belongs to the SurE nucleotidase family.</text>
</comment>
<protein>
    <recommendedName>
        <fullName evidence="1">5'-nucleotidase SurE</fullName>
        <ecNumber evidence="1">3.1.3.5</ecNumber>
    </recommendedName>
    <alternativeName>
        <fullName evidence="1">Nucleoside 5'-monophosphate phosphohydrolase</fullName>
    </alternativeName>
</protein>
<organism>
    <name type="scientific">Methanococcus maripaludis (strain C5 / ATCC BAA-1333)</name>
    <dbReference type="NCBI Taxonomy" id="402880"/>
    <lineage>
        <taxon>Archaea</taxon>
        <taxon>Methanobacteriati</taxon>
        <taxon>Methanobacteriota</taxon>
        <taxon>Methanomada group</taxon>
        <taxon>Methanococci</taxon>
        <taxon>Methanococcales</taxon>
        <taxon>Methanococcaceae</taxon>
        <taxon>Methanococcus</taxon>
    </lineage>
</organism>
<name>SURE_METM5</name>
<proteinExistence type="inferred from homology"/>
<sequence>MTMEILLVNDDGIYSNGLLALKNVISEEFDANITVVAPTNQQSGIGRAISLFEPLRITKTKLADCSEGYAVSGTPTDCVVLGVHQVLKKVPDYVISGINIGENLGTEITTSGTLGAAFEGAHHGAKALACSLQVTTDHLKFKEGESPIDFMNTARIVRNVFKKFIDDEFPCDVININVPDNATENTPVEITKLAKKMYSMHVEERIDPRSRSYYWLDGYPIMDEEDGTDVYAVRNKRNVSVTPLTLDNTAKNLDEFKEKYAKKF</sequence>
<reference key="1">
    <citation type="submission" date="2007-03" db="EMBL/GenBank/DDBJ databases">
        <title>Complete sequence of chromosome of Methanococcus maripaludis C5.</title>
        <authorList>
            <consortium name="US DOE Joint Genome Institute"/>
            <person name="Copeland A."/>
            <person name="Lucas S."/>
            <person name="Lapidus A."/>
            <person name="Barry K."/>
            <person name="Glavina del Rio T."/>
            <person name="Dalin E."/>
            <person name="Tice H."/>
            <person name="Pitluck S."/>
            <person name="Chertkov O."/>
            <person name="Brettin T."/>
            <person name="Bruce D."/>
            <person name="Han C."/>
            <person name="Detter J.C."/>
            <person name="Schmutz J."/>
            <person name="Larimer F."/>
            <person name="Land M."/>
            <person name="Hauser L."/>
            <person name="Kyrpides N."/>
            <person name="Mikhailova N."/>
            <person name="Sieprawska-Lupa M."/>
            <person name="Whitman W.B."/>
            <person name="Richardson P."/>
        </authorList>
    </citation>
    <scope>NUCLEOTIDE SEQUENCE [LARGE SCALE GENOMIC DNA]</scope>
    <source>
        <strain>C5 / ATCC BAA-1333</strain>
    </source>
</reference>
<feature type="chain" id="PRO_0000335293" description="5'-nucleotidase SurE">
    <location>
        <begin position="1"/>
        <end position="264"/>
    </location>
</feature>
<feature type="binding site" evidence="1">
    <location>
        <position position="10"/>
    </location>
    <ligand>
        <name>a divalent metal cation</name>
        <dbReference type="ChEBI" id="CHEBI:60240"/>
    </ligand>
</feature>
<feature type="binding site" evidence="1">
    <location>
        <position position="11"/>
    </location>
    <ligand>
        <name>a divalent metal cation</name>
        <dbReference type="ChEBI" id="CHEBI:60240"/>
    </ligand>
</feature>
<feature type="binding site" evidence="1">
    <location>
        <position position="43"/>
    </location>
    <ligand>
        <name>a divalent metal cation</name>
        <dbReference type="ChEBI" id="CHEBI:60240"/>
    </ligand>
</feature>
<feature type="binding site" evidence="1">
    <location>
        <position position="99"/>
    </location>
    <ligand>
        <name>a divalent metal cation</name>
        <dbReference type="ChEBI" id="CHEBI:60240"/>
    </ligand>
</feature>
<gene>
    <name evidence="1" type="primary">surE</name>
    <name type="ordered locus">MmarC5_0542</name>
</gene>
<evidence type="ECO:0000255" key="1">
    <source>
        <dbReference type="HAMAP-Rule" id="MF_00060"/>
    </source>
</evidence>
<dbReference type="EC" id="3.1.3.5" evidence="1"/>
<dbReference type="EMBL" id="CP000609">
    <property type="protein sequence ID" value="ABO34856.1"/>
    <property type="molecule type" value="Genomic_DNA"/>
</dbReference>
<dbReference type="RefSeq" id="WP_011868311.1">
    <property type="nucleotide sequence ID" value="NC_009135.1"/>
</dbReference>
<dbReference type="SMR" id="A4FXC7"/>
<dbReference type="STRING" id="402880.MmarC5_0542"/>
<dbReference type="GeneID" id="4929097"/>
<dbReference type="KEGG" id="mmq:MmarC5_0542"/>
<dbReference type="eggNOG" id="arCOG02303">
    <property type="taxonomic scope" value="Archaea"/>
</dbReference>
<dbReference type="HOGENOM" id="CLU_045192_1_3_2"/>
<dbReference type="OrthoDB" id="26873at2157"/>
<dbReference type="Proteomes" id="UP000000253">
    <property type="component" value="Chromosome"/>
</dbReference>
<dbReference type="GO" id="GO:0005737">
    <property type="term" value="C:cytoplasm"/>
    <property type="evidence" value="ECO:0007669"/>
    <property type="project" value="UniProtKB-SubCell"/>
</dbReference>
<dbReference type="GO" id="GO:0008253">
    <property type="term" value="F:5'-nucleotidase activity"/>
    <property type="evidence" value="ECO:0007669"/>
    <property type="project" value="UniProtKB-UniRule"/>
</dbReference>
<dbReference type="GO" id="GO:0046872">
    <property type="term" value="F:metal ion binding"/>
    <property type="evidence" value="ECO:0007669"/>
    <property type="project" value="UniProtKB-UniRule"/>
</dbReference>
<dbReference type="GO" id="GO:0000166">
    <property type="term" value="F:nucleotide binding"/>
    <property type="evidence" value="ECO:0007669"/>
    <property type="project" value="UniProtKB-KW"/>
</dbReference>
<dbReference type="Gene3D" id="3.40.1210.10">
    <property type="entry name" value="Survival protein SurE-like phosphatase/nucleotidase"/>
    <property type="match status" value="1"/>
</dbReference>
<dbReference type="HAMAP" id="MF_00060">
    <property type="entry name" value="SurE"/>
    <property type="match status" value="1"/>
</dbReference>
<dbReference type="InterPro" id="IPR030048">
    <property type="entry name" value="SurE"/>
</dbReference>
<dbReference type="InterPro" id="IPR002828">
    <property type="entry name" value="SurE-like_Pase/nucleotidase"/>
</dbReference>
<dbReference type="InterPro" id="IPR036523">
    <property type="entry name" value="SurE-like_sf"/>
</dbReference>
<dbReference type="NCBIfam" id="NF001491">
    <property type="entry name" value="PRK00346.2-1"/>
    <property type="match status" value="1"/>
</dbReference>
<dbReference type="NCBIfam" id="TIGR00087">
    <property type="entry name" value="surE"/>
    <property type="match status" value="1"/>
</dbReference>
<dbReference type="PANTHER" id="PTHR30457">
    <property type="entry name" value="5'-NUCLEOTIDASE SURE"/>
    <property type="match status" value="1"/>
</dbReference>
<dbReference type="PANTHER" id="PTHR30457:SF0">
    <property type="entry name" value="PHOSPHATASE, PUTATIVE (AFU_ORTHOLOGUE AFUA_4G01070)-RELATED"/>
    <property type="match status" value="1"/>
</dbReference>
<dbReference type="Pfam" id="PF01975">
    <property type="entry name" value="SurE"/>
    <property type="match status" value="1"/>
</dbReference>
<dbReference type="SUPFAM" id="SSF64167">
    <property type="entry name" value="SurE-like"/>
    <property type="match status" value="1"/>
</dbReference>
<keyword id="KW-0963">Cytoplasm</keyword>
<keyword id="KW-0378">Hydrolase</keyword>
<keyword id="KW-0479">Metal-binding</keyword>
<keyword id="KW-0547">Nucleotide-binding</keyword>
<accession>A4FXC7</accession>